<comment type="function">
    <text evidence="1">Component of the proteasome core, a large protease complex with broad specificity involved in protein degradation.</text>
</comment>
<comment type="activity regulation">
    <text evidence="1">The formation of the proteasomal ATPase ARC-20S proteasome complex, likely via the docking of the C-termini of ARC into the intersubunit pockets in the alpha-rings, may trigger opening of the gate for substrate entry. Interconversion between the open-gate and close-gate conformations leads to a dynamic regulation of the 20S proteasome proteolysis activity.</text>
</comment>
<comment type="pathway">
    <text evidence="1">Protein degradation; proteasomal Pup-dependent pathway.</text>
</comment>
<comment type="subunit">
    <text evidence="1">The 20S proteasome core is composed of 14 alpha and 14 beta subunits that assemble into four stacked heptameric rings, resulting in a barrel-shaped structure. The two inner rings, each composed of seven catalytic beta subunits, are sandwiched by two outer rings, each composed of seven alpha subunits. The catalytic chamber with the active sites is on the inside of the barrel. Has a gated structure, the ends of the cylinder being occluded by the N-termini of the alpha-subunits. Is capped by the proteasome-associated ATPase, ARC.</text>
</comment>
<comment type="subcellular location">
    <subcellularLocation>
        <location evidence="1">Cytoplasm</location>
    </subcellularLocation>
</comment>
<comment type="similarity">
    <text evidence="1">Belongs to the peptidase T1A family.</text>
</comment>
<organism>
    <name type="scientific">Acidimicrobium ferrooxidans (strain DSM 10331 / JCM 15462 / NBRC 103882 / ICP)</name>
    <dbReference type="NCBI Taxonomy" id="525909"/>
    <lineage>
        <taxon>Bacteria</taxon>
        <taxon>Bacillati</taxon>
        <taxon>Actinomycetota</taxon>
        <taxon>Acidimicrobiia</taxon>
        <taxon>Acidimicrobiales</taxon>
        <taxon>Acidimicrobiaceae</taxon>
        <taxon>Acidimicrobium</taxon>
    </lineage>
</organism>
<feature type="chain" id="PRO_0000397130" description="Proteasome subunit alpha">
    <location>
        <begin position="1"/>
        <end position="232"/>
    </location>
</feature>
<keyword id="KW-0963">Cytoplasm</keyword>
<keyword id="KW-0647">Proteasome</keyword>
<keyword id="KW-1185">Reference proteome</keyword>
<evidence type="ECO:0000255" key="1">
    <source>
        <dbReference type="HAMAP-Rule" id="MF_00289"/>
    </source>
</evidence>
<accession>C7LYP8</accession>
<protein>
    <recommendedName>
        <fullName evidence="1">Proteasome subunit alpha</fullName>
    </recommendedName>
    <alternativeName>
        <fullName evidence="1">20S proteasome alpha subunit</fullName>
    </alternativeName>
    <alternativeName>
        <fullName evidence="1">Proteasome core protein PrcA</fullName>
    </alternativeName>
</protein>
<gene>
    <name evidence="1" type="primary">prcA</name>
    <name type="ordered locus">Afer_0911</name>
</gene>
<reference key="1">
    <citation type="journal article" date="2009" name="Stand. Genomic Sci.">
        <title>Complete genome sequence of Acidimicrobium ferrooxidans type strain (ICP).</title>
        <authorList>
            <person name="Clum A."/>
            <person name="Nolan M."/>
            <person name="Lang E."/>
            <person name="Glavina Del Rio T."/>
            <person name="Tice H."/>
            <person name="Copeland A."/>
            <person name="Cheng J.F."/>
            <person name="Lucas S."/>
            <person name="Chen F."/>
            <person name="Bruce D."/>
            <person name="Goodwin L."/>
            <person name="Pitluck S."/>
            <person name="Ivanova N."/>
            <person name="Mavrommatis K."/>
            <person name="Mikhailova N."/>
            <person name="Pati A."/>
            <person name="Chen A."/>
            <person name="Palaniappan K."/>
            <person name="Goker M."/>
            <person name="Spring S."/>
            <person name="Land M."/>
            <person name="Hauser L."/>
            <person name="Chang Y.J."/>
            <person name="Jeffries C.C."/>
            <person name="Chain P."/>
            <person name="Bristow J."/>
            <person name="Eisen J.A."/>
            <person name="Markowitz V."/>
            <person name="Hugenholtz P."/>
            <person name="Kyrpides N.C."/>
            <person name="Klenk H.P."/>
            <person name="Lapidus A."/>
        </authorList>
    </citation>
    <scope>NUCLEOTIDE SEQUENCE [LARGE SCALE GENOMIC DNA]</scope>
    <source>
        <strain>DSM 10331 / JCM 15462 / NBRC 103882 / ICP</strain>
    </source>
</reference>
<proteinExistence type="inferred from homology"/>
<sequence length="232" mass="25904">MSMPFYVAPEQLMKDRADYARKGIARGRALIGAVWEGGIIIVAENPSRSLHKLSEIYDRIAFGGVGKYNEFDQLRVAGIRHADLKGYAYAREDVDARSLANLYAQYLGTVFTHEMKPLEVEILVAELGNGHRESQLFQILYDGTVMDEREFAVLGGDADAIAERFRALYDASGPRERLLQSARDALSGQRPPIGADDLEVVVLEDRGERRCFRRLEVDEVREALGDQPEGSA</sequence>
<name>PSA_ACIFD</name>
<dbReference type="EMBL" id="CP001631">
    <property type="protein sequence ID" value="ACU53856.1"/>
    <property type="molecule type" value="Genomic_DNA"/>
</dbReference>
<dbReference type="RefSeq" id="WP_015798345.1">
    <property type="nucleotide sequence ID" value="NC_013124.1"/>
</dbReference>
<dbReference type="SMR" id="C7LYP8"/>
<dbReference type="STRING" id="525909.Afer_0911"/>
<dbReference type="MEROPS" id="T01.980"/>
<dbReference type="KEGG" id="afo:Afer_0911"/>
<dbReference type="eggNOG" id="COG0638">
    <property type="taxonomic scope" value="Bacteria"/>
</dbReference>
<dbReference type="HOGENOM" id="CLU_071031_0_0_11"/>
<dbReference type="OrthoDB" id="9775643at2"/>
<dbReference type="UniPathway" id="UPA00997"/>
<dbReference type="Proteomes" id="UP000000771">
    <property type="component" value="Chromosome"/>
</dbReference>
<dbReference type="GO" id="GO:0005737">
    <property type="term" value="C:cytoplasm"/>
    <property type="evidence" value="ECO:0007669"/>
    <property type="project" value="UniProtKB-SubCell"/>
</dbReference>
<dbReference type="GO" id="GO:0019773">
    <property type="term" value="C:proteasome core complex, alpha-subunit complex"/>
    <property type="evidence" value="ECO:0007669"/>
    <property type="project" value="UniProtKB-UniRule"/>
</dbReference>
<dbReference type="GO" id="GO:0004298">
    <property type="term" value="F:threonine-type endopeptidase activity"/>
    <property type="evidence" value="ECO:0007669"/>
    <property type="project" value="InterPro"/>
</dbReference>
<dbReference type="GO" id="GO:0019941">
    <property type="term" value="P:modification-dependent protein catabolic process"/>
    <property type="evidence" value="ECO:0007669"/>
    <property type="project" value="UniProtKB-UniRule"/>
</dbReference>
<dbReference type="GO" id="GO:0010498">
    <property type="term" value="P:proteasomal protein catabolic process"/>
    <property type="evidence" value="ECO:0007669"/>
    <property type="project" value="UniProtKB-UniRule"/>
</dbReference>
<dbReference type="Gene3D" id="3.60.20.10">
    <property type="entry name" value="Glutamine Phosphoribosylpyrophosphate, subunit 1, domain 1"/>
    <property type="match status" value="1"/>
</dbReference>
<dbReference type="HAMAP" id="MF_00289_B">
    <property type="entry name" value="Proteasome_A_B"/>
    <property type="match status" value="1"/>
</dbReference>
<dbReference type="InterPro" id="IPR029055">
    <property type="entry name" value="Ntn_hydrolases_N"/>
</dbReference>
<dbReference type="InterPro" id="IPR023332">
    <property type="entry name" value="Proteasome_alpha-type"/>
</dbReference>
<dbReference type="InterPro" id="IPR022296">
    <property type="entry name" value="Proteasome_asu_bac"/>
</dbReference>
<dbReference type="InterPro" id="IPR001353">
    <property type="entry name" value="Proteasome_sua/b"/>
</dbReference>
<dbReference type="NCBIfam" id="TIGR03691">
    <property type="entry name" value="20S_bact_alpha"/>
    <property type="match status" value="1"/>
</dbReference>
<dbReference type="Pfam" id="PF00227">
    <property type="entry name" value="Proteasome"/>
    <property type="match status" value="1"/>
</dbReference>
<dbReference type="SUPFAM" id="SSF56235">
    <property type="entry name" value="N-terminal nucleophile aminohydrolases (Ntn hydrolases)"/>
    <property type="match status" value="1"/>
</dbReference>
<dbReference type="PROSITE" id="PS51475">
    <property type="entry name" value="PROTEASOME_ALPHA_2"/>
    <property type="match status" value="1"/>
</dbReference>